<comment type="function">
    <text evidence="4 5 6 7 8 9 10 11 12 13 14 15 16 17 18 19 20 21 22">Transcription factor required for zygotic genome activation (ZGA), a critical event in early embryonic development during which the developmental control passes from maternally provided mRNAs to the expression of the zygotic genome after fertilization (PubMed:18931655, PubMed:20599892, PubMed:22028662, PubMed:22028675, PubMed:24637116, PubMed:24909324, PubMed:25538246, PubMed:26335633, PubMed:26335634, PubMed:29261646, PubMed:30518940, PubMed:30797686, PubMed:30982648, PubMed:34342574, PubMed:35363606, PubMed:37557175). Binds to regulatory DNA sequences containing a 5'-CAGGTAG-3' sequence motif, which are highly enriched among developmental enhancers (PubMed:18931655, PubMed:22028662, PubMed:22028675, PubMed:35363606, PubMed:37557175). Within 1 hour into development, or by the embryo's 8th nuclear cycle, binds the majority of its motifs genome-wide (PubMed:22028662, PubMed:22028675). Zelda-binding promotes nucleosome depletion and chromatin accessibility, thereby facilitating the binding of patterning transcription factors, including the binding of the dorsoventral patterning transcription factors dorsal (dl) and twist (twi), and the anteroposterior patterning transcription factors bicoid (bcd) and caudal (cad) (PubMed:24637116, PubMed:24909324, PubMed:26335633, PubMed:26335634, PubMed:30518940, PubMed:30797686, PubMed:30982648, PubMed:34342574, PubMed:35363606, PubMed:37557175). Promotes the activity of patterning transcription factors, such as bcd and dl, by lowering the concentration threshold required for transcriptional activation (PubMed:24637116, PubMed:35363606). Required both for the earliest (minor) and major waves of transcription during ZGA (PubMed:22028662). Also involved in maternal mRNA clearance during the maternal-to-zygote transition by promoting expression of microRNAs (miRNAs), such as miR-1, miR-9a and miR-309, which mediate degradation of maternally-loaded RNAs (PubMed:18931655, PubMed:24764079). Also involved in post-blastoderm development: nvolved in nervous system development by maintaining neuroblasts in an undifferentiated state and equired for wing disk development (PubMed:23891688, PubMed:34887421).</text>
</comment>
<comment type="function">
    <molecule>Isoform A</molecule>
    <text evidence="15">Constitutes the main isoform expressed throughout development (PubMed:29261646). Transcription factor required for zygotic genome activation (ZGA) (PubMed:29261646).</text>
</comment>
<comment type="function">
    <molecule>Isoform D</molecule>
    <text evidence="12">Acts as a dominant negative inhibitor of transcription factor activity of isoform A.</text>
</comment>
<comment type="function">
    <molecule>Isoform F</molecule>
    <text evidence="12">Acts as a dominant negative inhibitor of transcription factor activity of isoform A.</text>
</comment>
<comment type="subcellular location">
    <subcellularLocation>
        <location evidence="3 7 16 18">Nucleus</location>
    </subcellularLocation>
    <subcellularLocation>
        <location evidence="3 7">Chromosome</location>
    </subcellularLocation>
</comment>
<comment type="alternative products">
    <event type="alternative splicing"/>
    <isoform>
        <id>Q9VWC6-1</id>
        <name>A</name>
        <name>B</name>
        <name>G</name>
        <name evidence="25">ZLD-PA</name>
        <sequence type="displayed"/>
    </isoform>
    <isoform>
        <id>Q9VWC6-2</id>
        <name>D</name>
        <name evidence="25">ZLD-PD</name>
        <sequence type="described" ref="VSP_062074 VSP_062077"/>
    </isoform>
    <isoform>
        <id>Q9VWC6-3</id>
        <name>F</name>
        <name evidence="25">ZLD-PF</name>
        <sequence type="described" ref="VSP_062075 VSP_062076"/>
    </isoform>
</comment>
<comment type="tissue specificity">
    <molecule>Isoform A</molecule>
    <text evidence="15">Zygotically expressed in the developing embryonic germ layers, nervous system, imaginal disk primordia and in larval wing and eye disks.</text>
</comment>
<comment type="tissue specificity">
    <text evidence="3 4 8">Detected in the germline cells of the ovary, in unfertilized eggs and throughout early development (PubMed:16525017, PubMed:18931655). Later, it becomes mostly restricted to the nervous system and specific head regions (PubMed:18931655). Also expressed in imaginal wing disks in third instar larvae (PubMed:23891688).</text>
</comment>
<comment type="developmental stage">
    <text evidence="3 4">Expressed both maternally and zygotically.</text>
</comment>
<comment type="domain">
    <text evidence="12 15">C2H2-type zinc fingers mediate DNA-binding (PubMed:25538246). C2H2-type zinc finger 2 serves as an inhibitory domain, and is essential for reprogramming the early embryonic genome, but not for its functions later in development (PubMed:29261646).</text>
</comment>
<comment type="disruption phenotype">
    <text evidence="4 13">Embryonic lethality: embryos are defective in cellular blastoderm formation and fail to activate genes essential for cellularization, sex determination and pattern formation (PubMed:18931655). Cells display nucleosome occupancy at dorsal (dl)-bound regions (PubMed:26335633).</text>
</comment>
<comment type="miscellaneous">
    <text evidence="3">'Vielfaeltig' means 'versatile' or 'manifold' in German.</text>
</comment>
<gene>
    <name evidence="24 27" type="primary">zld</name>
    <name evidence="23" type="synonym">vfl</name>
    <name evidence="27" type="ORF">CG12701</name>
</gene>
<protein>
    <recommendedName>
        <fullName evidence="24">Transcription factor Zelda</fullName>
    </recommendedName>
    <alternativeName>
        <fullName evidence="23">Protein vielfaeltig</fullName>
    </alternativeName>
</protein>
<reference key="1">
    <citation type="journal article" date="2000" name="Science">
        <title>The genome sequence of Drosophila melanogaster.</title>
        <authorList>
            <person name="Adams M.D."/>
            <person name="Celniker S.E."/>
            <person name="Holt R.A."/>
            <person name="Evans C.A."/>
            <person name="Gocayne J.D."/>
            <person name="Amanatides P.G."/>
            <person name="Scherer S.E."/>
            <person name="Li P.W."/>
            <person name="Hoskins R.A."/>
            <person name="Galle R.F."/>
            <person name="George R.A."/>
            <person name="Lewis S.E."/>
            <person name="Richards S."/>
            <person name="Ashburner M."/>
            <person name="Henderson S.N."/>
            <person name="Sutton G.G."/>
            <person name="Wortman J.R."/>
            <person name="Yandell M.D."/>
            <person name="Zhang Q."/>
            <person name="Chen L.X."/>
            <person name="Brandon R.C."/>
            <person name="Rogers Y.-H.C."/>
            <person name="Blazej R.G."/>
            <person name="Champe M."/>
            <person name="Pfeiffer B.D."/>
            <person name="Wan K.H."/>
            <person name="Doyle C."/>
            <person name="Baxter E.G."/>
            <person name="Helt G."/>
            <person name="Nelson C.R."/>
            <person name="Miklos G.L.G."/>
            <person name="Abril J.F."/>
            <person name="Agbayani A."/>
            <person name="An H.-J."/>
            <person name="Andrews-Pfannkoch C."/>
            <person name="Baldwin D."/>
            <person name="Ballew R.M."/>
            <person name="Basu A."/>
            <person name="Baxendale J."/>
            <person name="Bayraktaroglu L."/>
            <person name="Beasley E.M."/>
            <person name="Beeson K.Y."/>
            <person name="Benos P.V."/>
            <person name="Berman B.P."/>
            <person name="Bhandari D."/>
            <person name="Bolshakov S."/>
            <person name="Borkova D."/>
            <person name="Botchan M.R."/>
            <person name="Bouck J."/>
            <person name="Brokstein P."/>
            <person name="Brottier P."/>
            <person name="Burtis K.C."/>
            <person name="Busam D.A."/>
            <person name="Butler H."/>
            <person name="Cadieu E."/>
            <person name="Center A."/>
            <person name="Chandra I."/>
            <person name="Cherry J.M."/>
            <person name="Cawley S."/>
            <person name="Dahlke C."/>
            <person name="Davenport L.B."/>
            <person name="Davies P."/>
            <person name="de Pablos B."/>
            <person name="Delcher A."/>
            <person name="Deng Z."/>
            <person name="Mays A.D."/>
            <person name="Dew I."/>
            <person name="Dietz S.M."/>
            <person name="Dodson K."/>
            <person name="Doup L.E."/>
            <person name="Downes M."/>
            <person name="Dugan-Rocha S."/>
            <person name="Dunkov B.C."/>
            <person name="Dunn P."/>
            <person name="Durbin K.J."/>
            <person name="Evangelista C.C."/>
            <person name="Ferraz C."/>
            <person name="Ferriera S."/>
            <person name="Fleischmann W."/>
            <person name="Fosler C."/>
            <person name="Gabrielian A.E."/>
            <person name="Garg N.S."/>
            <person name="Gelbart W.M."/>
            <person name="Glasser K."/>
            <person name="Glodek A."/>
            <person name="Gong F."/>
            <person name="Gorrell J.H."/>
            <person name="Gu Z."/>
            <person name="Guan P."/>
            <person name="Harris M."/>
            <person name="Harris N.L."/>
            <person name="Harvey D.A."/>
            <person name="Heiman T.J."/>
            <person name="Hernandez J.R."/>
            <person name="Houck J."/>
            <person name="Hostin D."/>
            <person name="Houston K.A."/>
            <person name="Howland T.J."/>
            <person name="Wei M.-H."/>
            <person name="Ibegwam C."/>
            <person name="Jalali M."/>
            <person name="Kalush F."/>
            <person name="Karpen G.H."/>
            <person name="Ke Z."/>
            <person name="Kennison J.A."/>
            <person name="Ketchum K.A."/>
            <person name="Kimmel B.E."/>
            <person name="Kodira C.D."/>
            <person name="Kraft C.L."/>
            <person name="Kravitz S."/>
            <person name="Kulp D."/>
            <person name="Lai Z."/>
            <person name="Lasko P."/>
            <person name="Lei Y."/>
            <person name="Levitsky A.A."/>
            <person name="Li J.H."/>
            <person name="Li Z."/>
            <person name="Liang Y."/>
            <person name="Lin X."/>
            <person name="Liu X."/>
            <person name="Mattei B."/>
            <person name="McIntosh T.C."/>
            <person name="McLeod M.P."/>
            <person name="McPherson D."/>
            <person name="Merkulov G."/>
            <person name="Milshina N.V."/>
            <person name="Mobarry C."/>
            <person name="Morris J."/>
            <person name="Moshrefi A."/>
            <person name="Mount S.M."/>
            <person name="Moy M."/>
            <person name="Murphy B."/>
            <person name="Murphy L."/>
            <person name="Muzny D.M."/>
            <person name="Nelson D.L."/>
            <person name="Nelson D.R."/>
            <person name="Nelson K.A."/>
            <person name="Nixon K."/>
            <person name="Nusskern D.R."/>
            <person name="Pacleb J.M."/>
            <person name="Palazzolo M."/>
            <person name="Pittman G.S."/>
            <person name="Pan S."/>
            <person name="Pollard J."/>
            <person name="Puri V."/>
            <person name="Reese M.G."/>
            <person name="Reinert K."/>
            <person name="Remington K."/>
            <person name="Saunders R.D.C."/>
            <person name="Scheeler F."/>
            <person name="Shen H."/>
            <person name="Shue B.C."/>
            <person name="Siden-Kiamos I."/>
            <person name="Simpson M."/>
            <person name="Skupski M.P."/>
            <person name="Smith T.J."/>
            <person name="Spier E."/>
            <person name="Spradling A.C."/>
            <person name="Stapleton M."/>
            <person name="Strong R."/>
            <person name="Sun E."/>
            <person name="Svirskas R."/>
            <person name="Tector C."/>
            <person name="Turner R."/>
            <person name="Venter E."/>
            <person name="Wang A.H."/>
            <person name="Wang X."/>
            <person name="Wang Z.-Y."/>
            <person name="Wassarman D.A."/>
            <person name="Weinstock G.M."/>
            <person name="Weissenbach J."/>
            <person name="Williams S.M."/>
            <person name="Woodage T."/>
            <person name="Worley K.C."/>
            <person name="Wu D."/>
            <person name="Yang S."/>
            <person name="Yao Q.A."/>
            <person name="Ye J."/>
            <person name="Yeh R.-F."/>
            <person name="Zaveri J.S."/>
            <person name="Zhan M."/>
            <person name="Zhang G."/>
            <person name="Zhao Q."/>
            <person name="Zheng L."/>
            <person name="Zheng X.H."/>
            <person name="Zhong F.N."/>
            <person name="Zhong W."/>
            <person name="Zhou X."/>
            <person name="Zhu S.C."/>
            <person name="Zhu X."/>
            <person name="Smith H.O."/>
            <person name="Gibbs R.A."/>
            <person name="Myers E.W."/>
            <person name="Rubin G.M."/>
            <person name="Venter J.C."/>
        </authorList>
    </citation>
    <scope>NUCLEOTIDE SEQUENCE [LARGE SCALE GENOMIC DNA]</scope>
    <source>
        <strain>Berkeley</strain>
    </source>
</reference>
<reference key="2">
    <citation type="journal article" date="2002" name="Genome Biol.">
        <title>Annotation of the Drosophila melanogaster euchromatic genome: a systematic review.</title>
        <authorList>
            <person name="Misra S."/>
            <person name="Crosby M.A."/>
            <person name="Mungall C.J."/>
            <person name="Matthews B.B."/>
            <person name="Campbell K.S."/>
            <person name="Hradecky P."/>
            <person name="Huang Y."/>
            <person name="Kaminker J.S."/>
            <person name="Millburn G.H."/>
            <person name="Prochnik S.E."/>
            <person name="Smith C.D."/>
            <person name="Tupy J.L."/>
            <person name="Whitfield E.J."/>
            <person name="Bayraktaroglu L."/>
            <person name="Berman B.P."/>
            <person name="Bettencourt B.R."/>
            <person name="Celniker S.E."/>
            <person name="de Grey A.D.N.J."/>
            <person name="Drysdale R.A."/>
            <person name="Harris N.L."/>
            <person name="Richter J."/>
            <person name="Russo S."/>
            <person name="Schroeder A.J."/>
            <person name="Shu S.Q."/>
            <person name="Stapleton M."/>
            <person name="Yamada C."/>
            <person name="Ashburner M."/>
            <person name="Gelbart W.M."/>
            <person name="Rubin G.M."/>
            <person name="Lewis S.E."/>
        </authorList>
    </citation>
    <scope>GENOME REANNOTATION</scope>
    <source>
        <strain>Berkeley</strain>
    </source>
</reference>
<reference evidence="26" key="3">
    <citation type="submission" date="2011-12" db="EMBL/GenBank/DDBJ databases">
        <authorList>
            <person name="Carlson J."/>
            <person name="Booth B."/>
            <person name="Frise E."/>
            <person name="Park S."/>
            <person name="Wan K."/>
            <person name="Yu C."/>
            <person name="Celniker S."/>
        </authorList>
    </citation>
    <scope>NUCLEOTIDE SEQUENCE [LARGE SCALE MRNA]</scope>
</reference>
<reference key="4">
    <citation type="journal article" date="2006" name="Mol. Biol. Cell">
        <title>Mutations of the Drosophila zinc finger-encoding gene vielfaeltig impair mitotic cell divisions and cause improper chromosome segregation.</title>
        <authorList>
            <person name="Staudt N."/>
            <person name="Fellert S."/>
            <person name="Chung H.R."/>
            <person name="Jaeckle H."/>
            <person name="Vorbrueggen G."/>
        </authorList>
    </citation>
    <scope>SUBCELLULAR LOCATION</scope>
    <scope>TISSUE SPECIFICITY</scope>
    <scope>DEVELOPMENTAL STAGE</scope>
</reference>
<reference key="5">
    <citation type="journal article" date="2008" name="Nature">
        <title>The zinc-finger protein Zelda is a key activator of the early zygotic genome in Drosophila.</title>
        <authorList>
            <person name="Liang H.L."/>
            <person name="Nien C.Y."/>
            <person name="Liu H.Y."/>
            <person name="Metzstein M.M."/>
            <person name="Kirov N."/>
            <person name="Rushlow C."/>
        </authorList>
    </citation>
    <scope>FUNCTION</scope>
    <scope>TISSUE SPECIFICITY</scope>
    <scope>DEVELOPMENTAL STAGE</scope>
    <scope>DISRUPTION PHENOTYPE</scope>
</reference>
<reference key="6">
    <citation type="journal article" date="2010" name="Dev. Biol.">
        <title>Grainyhead and Zelda compete for binding to the promoters of the earliest-expressed Drosophila genes.</title>
        <authorList>
            <person name="Harrison M.M."/>
            <person name="Botchan M.R."/>
            <person name="Cline T.W."/>
        </authorList>
    </citation>
    <scope>FUNCTION</scope>
</reference>
<reference key="7">
    <citation type="journal article" date="2011" name="PLoS Genet.">
        <title>Zelda binding in the early Drosophila melanogaster embryo marks regions subsequently activated at the maternal-to-zygotic transition.</title>
        <authorList>
            <person name="Harrison M.M."/>
            <person name="Li X.Y."/>
            <person name="Kaplan T."/>
            <person name="Botchan M.R."/>
            <person name="Eisen M.B."/>
        </authorList>
    </citation>
    <scope>FUNCTION</scope>
</reference>
<reference key="8">
    <citation type="journal article" date="2011" name="PLoS Genet.">
        <title>Temporal coordination of gene networks by Zelda in the early Drosophila embryo.</title>
        <authorList>
            <person name="Nien C.Y."/>
            <person name="Liang H.L."/>
            <person name="Butcher S."/>
            <person name="Sun Y."/>
            <person name="Fu S."/>
            <person name="Gocha T."/>
            <person name="Kirov N."/>
            <person name="Manak J.R."/>
            <person name="Rushlow C."/>
        </authorList>
    </citation>
    <scope>FUNCTION</scope>
    <scope>SUBCELLULAR LOCATION</scope>
</reference>
<reference key="9">
    <citation type="journal article" date="2013" name="Biochem. Biophys. Res. Commun.">
        <title>The embryonic transcription factor Zelda of Drosophila melanogaster is also expressed in larvae and may regulate developmentally important genes.</title>
        <authorList>
            <person name="Giannios P."/>
            <person name="Tsitilou S.G."/>
        </authorList>
    </citation>
    <scope>FUNCTION</scope>
    <scope>TISSUE SPECIFICITY</scope>
</reference>
<reference key="10">
    <citation type="journal article" date="2014" name="Curr. Biol.">
        <title>Zelda potentiates morphogen activity by increasing chromatin accessibility.</title>
        <authorList>
            <person name="Foo S.M."/>
            <person name="Sun Y."/>
            <person name="Lim B."/>
            <person name="Ziukaite R."/>
            <person name="O'Brien K."/>
            <person name="Nien C.Y."/>
            <person name="Kirov N."/>
            <person name="Shvartsman S.Y."/>
            <person name="Rushlow C.A."/>
        </authorList>
    </citation>
    <scope>FUNCTION</scope>
</reference>
<reference key="11">
    <citation type="journal article" date="2014" name="Development">
        <title>Co-activation of microRNAs by Zelda is essential for early Drosophila development.</title>
        <authorList>
            <person name="Fu S."/>
            <person name="Nien C.Y."/>
            <person name="Liang H.L."/>
            <person name="Rushlow C."/>
        </authorList>
    </citation>
    <scope>FUNCTION</scope>
</reference>
<reference key="12">
    <citation type="journal article" date="2014" name="Genes Dev.">
        <title>Impacts of the ubiquitous factor Zelda on Bicoid-dependent DNA binding and transcription in Drosophila.</title>
        <authorList>
            <person name="Xu Z."/>
            <person name="Chen H."/>
            <person name="Ling J."/>
            <person name="Yu D."/>
            <person name="Struffi P."/>
            <person name="Small S."/>
        </authorList>
    </citation>
    <scope>FUNCTION</scope>
</reference>
<reference key="13">
    <citation type="journal article" date="2015" name="Genome Res.">
        <title>Zelda overcomes the high intrinsic nucleosome barrier at enhancers during Drosophila zygotic genome activation.</title>
        <authorList>
            <person name="Sun Y."/>
            <person name="Nien C.Y."/>
            <person name="Chen K."/>
            <person name="Liu H.Y."/>
            <person name="Johnston J."/>
            <person name="Zeitlinger J."/>
            <person name="Rushlow C."/>
        </authorList>
    </citation>
    <scope>FUNCTION</scope>
    <scope>DISRUPTION PHENOTYPE</scope>
</reference>
<reference key="14">
    <citation type="journal article" date="2015" name="Genome Res.">
        <title>Zelda is differentially required for chromatin accessibility, transcription factor binding, and gene expression in the early Drosophila embryo.</title>
        <authorList>
            <person name="Schulz K.N."/>
            <person name="Bondra E.R."/>
            <person name="Moshe A."/>
            <person name="Villalta J.E."/>
            <person name="Lieb J.D."/>
            <person name="Kaplan T."/>
            <person name="McKay D.J."/>
            <person name="Harrison M.M."/>
        </authorList>
    </citation>
    <scope>FUNCTION</scope>
</reference>
<reference key="15">
    <citation type="journal article" date="2015" name="J. Biol. Chem.">
        <title>Transcriptional activation is a conserved feature of the early embryonic factor Zelda that requires a cluster of four zinc fingers for DNA binding and a low-complexity activation domain.</title>
        <authorList>
            <person name="Hamm D.C."/>
            <person name="Bondra E.R."/>
            <person name="Harrison M.M."/>
        </authorList>
    </citation>
    <scope>FUNCTION (ISOFORMS D AND F)</scope>
    <scope>DOMAIN</scope>
    <scope>MUTAGENESIS OF 554-CYS--CYS-557; 1328-CYS--CYS-1331; 1386-CYS--CYS-1389 AND 1415-CYS--CYS-1418</scope>
</reference>
<reference key="16">
    <citation type="journal article" date="2017" name="PLoS Genet.">
        <title>A conserved maternal-specific repressive domain in Zelda revealed by Cas9-mediated mutagenesis in Drosophila melanogaster.</title>
        <authorList>
            <person name="Hamm D.C."/>
            <person name="Larson E.D."/>
            <person name="Nevil M."/>
            <person name="Marshall K.E."/>
            <person name="Bondra E.R."/>
            <person name="Harrison M.M."/>
        </authorList>
    </citation>
    <scope>FUNCTION (ISOFORM A)</scope>
    <scope>TISSUE SPECIFICITY (ISOFORM A)</scope>
    <scope>MUTAGENESIS OF CYS-554 AND 561-PHE--ASN-578</scope>
</reference>
<reference key="17">
    <citation type="journal article" date="2018" name="Nat. Commun.">
        <title>Temporal control of gene expression by the pioneer factor Zelda through transient interactions in hubs.</title>
        <authorList>
            <person name="Dufourt J."/>
            <person name="Trullo A."/>
            <person name="Hunter J."/>
            <person name="Fernandez C."/>
            <person name="Lazaro J."/>
            <person name="Dejean M."/>
            <person name="Morales L."/>
            <person name="Nait-Amer S."/>
            <person name="Schulz K.N."/>
            <person name="Harrison M.M."/>
            <person name="Favard C."/>
            <person name="Radulescu O."/>
            <person name="Lagha M."/>
        </authorList>
    </citation>
    <scope>FUNCTION</scope>
    <scope>SUBCELLULAR LOCATION</scope>
</reference>
<reference key="18">
    <citation type="journal article" date="2019" name="Curr. Biol.">
        <title>The Drosophila pioneer factor Zelda modulates the nuclear microenvironment of a Dorsal target enhancer to potentiate transcriptional output.</title>
        <authorList>
            <person name="Yamada S."/>
            <person name="Whitney P.H."/>
            <person name="Huang S.K."/>
            <person name="Eck E.C."/>
            <person name="Garcia H.G."/>
            <person name="Rushlow C.A."/>
        </authorList>
    </citation>
    <scope>FUNCTION</scope>
    <scope>SUBCELLULAR LOCATION</scope>
</reference>
<reference key="19">
    <citation type="journal article" date="2019" name="Mol. Cell">
        <title>Continued activity of the pioneer factor Zelda is required to drive zygotic genome activation.</title>
        <authorList>
            <person name="McDaniel S.L."/>
            <person name="Gibson T.J."/>
            <person name="Schulz K.N."/>
            <person name="Fernandez Garcia M."/>
            <person name="Nevil M."/>
            <person name="Jain S.U."/>
            <person name="Lewis P.W."/>
            <person name="Zaret K.S."/>
            <person name="Harrison M.M."/>
        </authorList>
    </citation>
    <scope>FUNCTION</scope>
</reference>
<reference key="20">
    <citation type="journal article" date="2021" name="Elife">
        <title>CLAMP and Zelda function together to promote Drosophila zygotic genome activation.</title>
        <authorList>
            <person name="Duan J."/>
            <person name="Rieder L."/>
            <person name="Colonnetta M.M."/>
            <person name="Huang A."/>
            <person name="Mckenney M."/>
            <person name="Watters S."/>
            <person name="Deshpande G."/>
            <person name="Jordan W."/>
            <person name="Fawzi N."/>
            <person name="Larschan E."/>
        </authorList>
    </citation>
    <scope>FUNCTION</scope>
</reference>
<reference key="21">
    <citation type="journal article" date="2021" name="Nat. Commun.">
        <title>Cell-type-specific chromatin occupancy by the pioneer factor Zelda drives key developmental transitions in Drosophila.</title>
        <authorList>
            <person name="Larson E.D."/>
            <person name="Komori H."/>
            <person name="Gibson T.J."/>
            <person name="Ostgaard C.M."/>
            <person name="Hamm D.C."/>
            <person name="Schnell J.M."/>
            <person name="Lee C.Y."/>
            <person name="Harrison M.M."/>
        </authorList>
    </citation>
    <scope>FUNCTION</scope>
</reference>
<reference key="22">
    <citation type="journal article" date="2022" name="Elife">
        <title>Synthetic reconstruction of the hunchback promoter specifies the role of Bicoid, Zelda and Hunchback in the dynamics of its transcription.</title>
        <authorList>
            <person name="Fernandes G."/>
            <person name="Tran H."/>
            <person name="Andrieu M."/>
            <person name="Diaw Y."/>
            <person name="Perez Romero C."/>
            <person name="Fradin C."/>
            <person name="Coppey M."/>
            <person name="Walczak A.M."/>
            <person name="Dostatni N."/>
        </authorList>
    </citation>
    <scope>FUNCTION</scope>
</reference>
<reference key="23">
    <citation type="journal article" date="2023" name="Dev. Cell">
        <title>Chromatin accessibility in the Drosophila embryo is determined by transcription factor pioneering and enhancer activation.</title>
        <authorList>
            <person name="Brennan K.J."/>
            <person name="Weilert M."/>
            <person name="Krueger S."/>
            <person name="Pampari A."/>
            <person name="Liu H.Y."/>
            <person name="Yang A.W.H."/>
            <person name="Morrison J.A."/>
            <person name="Hughes T.R."/>
            <person name="Rushlow C.A."/>
            <person name="Kundaje A."/>
            <person name="Zeitlinger J."/>
        </authorList>
    </citation>
    <scope>FUNCTION</scope>
</reference>
<evidence type="ECO:0000255" key="1">
    <source>
        <dbReference type="PROSITE-ProRule" id="PRU00042"/>
    </source>
</evidence>
<evidence type="ECO:0000256" key="2">
    <source>
        <dbReference type="SAM" id="MobiDB-lite"/>
    </source>
</evidence>
<evidence type="ECO:0000269" key="3">
    <source>
    </source>
</evidence>
<evidence type="ECO:0000269" key="4">
    <source>
    </source>
</evidence>
<evidence type="ECO:0000269" key="5">
    <source>
    </source>
</evidence>
<evidence type="ECO:0000269" key="6">
    <source>
    </source>
</evidence>
<evidence type="ECO:0000269" key="7">
    <source>
    </source>
</evidence>
<evidence type="ECO:0000269" key="8">
    <source>
    </source>
</evidence>
<evidence type="ECO:0000269" key="9">
    <source>
    </source>
</evidence>
<evidence type="ECO:0000269" key="10">
    <source>
    </source>
</evidence>
<evidence type="ECO:0000269" key="11">
    <source>
    </source>
</evidence>
<evidence type="ECO:0000269" key="12">
    <source>
    </source>
</evidence>
<evidence type="ECO:0000269" key="13">
    <source>
    </source>
</evidence>
<evidence type="ECO:0000269" key="14">
    <source>
    </source>
</evidence>
<evidence type="ECO:0000269" key="15">
    <source>
    </source>
</evidence>
<evidence type="ECO:0000269" key="16">
    <source>
    </source>
</evidence>
<evidence type="ECO:0000269" key="17">
    <source>
    </source>
</evidence>
<evidence type="ECO:0000269" key="18">
    <source>
    </source>
</evidence>
<evidence type="ECO:0000269" key="19">
    <source>
    </source>
</evidence>
<evidence type="ECO:0000269" key="20">
    <source>
    </source>
</evidence>
<evidence type="ECO:0000269" key="21">
    <source>
    </source>
</evidence>
<evidence type="ECO:0000269" key="22">
    <source>
    </source>
</evidence>
<evidence type="ECO:0000303" key="23">
    <source>
    </source>
</evidence>
<evidence type="ECO:0000303" key="24">
    <source>
    </source>
</evidence>
<evidence type="ECO:0000303" key="25">
    <source>
    </source>
</evidence>
<evidence type="ECO:0000312" key="26">
    <source>
        <dbReference type="EMBL" id="AEW31265.1"/>
    </source>
</evidence>
<evidence type="ECO:0000312" key="27">
    <source>
        <dbReference type="FlyBase" id="FBgn0259789"/>
    </source>
</evidence>
<name>ZELDA_DROME</name>
<organism>
    <name type="scientific">Drosophila melanogaster</name>
    <name type="common">Fruit fly</name>
    <dbReference type="NCBI Taxonomy" id="7227"/>
    <lineage>
        <taxon>Eukaryota</taxon>
        <taxon>Metazoa</taxon>
        <taxon>Ecdysozoa</taxon>
        <taxon>Arthropoda</taxon>
        <taxon>Hexapoda</taxon>
        <taxon>Insecta</taxon>
        <taxon>Pterygota</taxon>
        <taxon>Neoptera</taxon>
        <taxon>Endopterygota</taxon>
        <taxon>Diptera</taxon>
        <taxon>Brachycera</taxon>
        <taxon>Muscomorpha</taxon>
        <taxon>Ephydroidea</taxon>
        <taxon>Drosophilidae</taxon>
        <taxon>Drosophila</taxon>
        <taxon>Sophophora</taxon>
    </lineage>
</organism>
<sequence>MTSIKTEMPPLHAAEALASSSATDSGGGGAGGGGGGGGGGSGGPGAGGTGGVGSAPATPNATISAAADSSDNQPGTPQPTQQQQSTQQQLQQPQSQQQQQQAMGGGDPQQQQQQQQVTGITHQPYATHHMYSASGGQQQQQQQIYGGLYGGDMQQQQGYASSYINSYEQFYQQQQQQQQGTDYAFGTVGVDYGKSAGVRYHPYLQTPTSGLGGIPTASSAQEEAGSAPSAVSTTTAVAMSPRVVSSSSPTSTSSHLQLGSSSGQTPGSPGGAAGSAGCKLQCKKCGILTTNESELQEHIANVHGESPYGSSGYASSPYIKEEMPTPQPPGVGSATANPGELLDLDSQKMVYHQQLLQQQQQQHDVVAGLPLGALPDPLHSMQSMQQRALHSWEQQPQQTVASVEGLPPYMQQGLGVGLGVGVDKSPYYSPKQSPYHQSTGVGGATLIKQEYGGHGLIKSEYPDSQHYVDKSFDPTAGGAGGAELCASVATSPAEFPSTTTGGPGQEGAAGAAPGGGYRGFEPPSSSSVLPANSLTAKAATWKSNEARRPKTYNCTACNKWFTSSGHLKRHYNTTLHKNAVKSSGQPDPATLPISAHHHPARDPVTKPSRRGNAAAAAAAAAAAASASGQGQQQQPPIPPPPANVPPPEPPRSPPDYGGGGGLGVGAMGGAAMSQYSASPSPTQQQQHHLNHHQQQANGYANGTANGYGYMQQQVQSTTNASPQHASNNNSNNQQQQQQQQQHHQQQMPQHHNSVLNGHPNGLAGPSAPHNNNTTQMPSSQMRGLLNETTTTPPPTTTTRAPQITTTATTTTTAATTVAIKSEQMEDSNHTHTHTHTHPNHSHSQDRSHSSSSSSSMATEEAEEQELRDQEQADDHLHQHQQASQQYLLSARHYHSSTPNTLSSSNTNPSTPSSNSPHTIYRQEQQGTDFSRTTPPPQPLPPMGMLPPMAMDYNMLALDMPMPMPTLMHSNMLQCSSTSTTPLATTITTSMPDTMQPPQQQLVHHYQAVLHPLHQQLGEQHQRQEADHHQQQRELHQLDQQQQQQQALILADSLPHSSSSPTSSSPPPTMPMPLTTITAPQLLPLQPPPPHITSTMPMPPTMHMPIMPPPPQCYQQLQPLDPTMSYHTIIGSGPEAHTGTAGGGYSNQITTSDGQILQLMPTSLFAPYAPLSPYSVAAQRSPQEGDLPPVHTLTTALHAHQQGGQQEAQTPTLTVLSTPYSPTVSSSRATPALEMDMATLMQHHQDYEMEQYQMQHQQLDQMQQHQQQLDHQQQQQILADQTQTMAQQPLAKKRRGGNATPSTTKRRRNSSVGSTSPHSTTLPSGRIKCLECDKEFTKNCYLTQHNKSFHSGEYPFRCQKCGKRFQSEDVYTTHLGRHRTQDKPHKCELCPKQFHHKTDLRRHVEAIHTGLKQHMCDICEKGFCRKDHLRKHLETHNRPRVVGKKSAAAAAAAAAAAAVTATAGLGGAPAAGSIKAAFARSLTVTAVSSEPGAGVAIPSAPATATCAPVSVSASALVQAVNPSLTSGLSLKRHIDDVAVDDDSLLEEDEDEMEMEMEMDMLEEEDEEEEELGDHHMIIKSEYVQEEFQMIEKSIELY</sequence>
<feature type="chain" id="PRO_0000459219" description="Transcription factor Zelda">
    <location>
        <begin position="1"/>
        <end position="1596"/>
    </location>
</feature>
<feature type="zinc finger region" description="C2H2-type 1" evidence="1">
    <location>
        <begin position="552"/>
        <end position="576"/>
    </location>
</feature>
<feature type="zinc finger region" description="C2H2-type 2" evidence="1 12">
    <location>
        <begin position="1326"/>
        <end position="1349"/>
    </location>
</feature>
<feature type="zinc finger region" description="C2H2-type 3; degenerate" evidence="1">
    <location>
        <begin position="1355"/>
        <end position="1378"/>
    </location>
</feature>
<feature type="zinc finger region" description="C2H2-type 4" evidence="1">
    <location>
        <begin position="1384"/>
        <end position="1407"/>
    </location>
</feature>
<feature type="zinc finger region" description="C2H2-type 5" evidence="1">
    <location>
        <begin position="1413"/>
        <end position="1435"/>
    </location>
</feature>
<feature type="region of interest" description="Disordered" evidence="2">
    <location>
        <begin position="1"/>
        <end position="143"/>
    </location>
</feature>
<feature type="region of interest" description="Disordered" evidence="2">
    <location>
        <begin position="209"/>
        <end position="273"/>
    </location>
</feature>
<feature type="region of interest" description="Disordered" evidence="2">
    <location>
        <begin position="490"/>
        <end position="530"/>
    </location>
</feature>
<feature type="region of interest" description="Disordered" evidence="2">
    <location>
        <begin position="578"/>
        <end position="813"/>
    </location>
</feature>
<feature type="region of interest" description="Disordered" evidence="2">
    <location>
        <begin position="825"/>
        <end position="945"/>
    </location>
</feature>
<feature type="region of interest" description="Transactivation activation domain (TAD)" evidence="12">
    <location>
        <begin position="904"/>
        <end position="1297"/>
    </location>
</feature>
<feature type="region of interest" description="Disordered" evidence="2">
    <location>
        <begin position="1017"/>
        <end position="1074"/>
    </location>
</feature>
<feature type="region of interest" description="Disordered" evidence="2">
    <location>
        <begin position="1252"/>
        <end position="1322"/>
    </location>
</feature>
<feature type="compositionally biased region" description="Low complexity" evidence="2">
    <location>
        <begin position="13"/>
        <end position="24"/>
    </location>
</feature>
<feature type="compositionally biased region" description="Gly residues" evidence="2">
    <location>
        <begin position="25"/>
        <end position="53"/>
    </location>
</feature>
<feature type="compositionally biased region" description="Polar residues" evidence="2">
    <location>
        <begin position="60"/>
        <end position="72"/>
    </location>
</feature>
<feature type="compositionally biased region" description="Low complexity" evidence="2">
    <location>
        <begin position="73"/>
        <end position="123"/>
    </location>
</feature>
<feature type="compositionally biased region" description="Low complexity" evidence="2">
    <location>
        <begin position="226"/>
        <end position="267"/>
    </location>
</feature>
<feature type="compositionally biased region" description="Gly residues" evidence="2">
    <location>
        <begin position="501"/>
        <end position="518"/>
    </location>
</feature>
<feature type="compositionally biased region" description="Low complexity" evidence="2">
    <location>
        <begin position="610"/>
        <end position="634"/>
    </location>
</feature>
<feature type="compositionally biased region" description="Pro residues" evidence="2">
    <location>
        <begin position="635"/>
        <end position="653"/>
    </location>
</feature>
<feature type="compositionally biased region" description="Gly residues" evidence="2">
    <location>
        <begin position="656"/>
        <end position="668"/>
    </location>
</feature>
<feature type="compositionally biased region" description="Polar residues" evidence="2">
    <location>
        <begin position="673"/>
        <end position="682"/>
    </location>
</feature>
<feature type="compositionally biased region" description="Low complexity" evidence="2">
    <location>
        <begin position="683"/>
        <end position="709"/>
    </location>
</feature>
<feature type="compositionally biased region" description="Low complexity" evidence="2">
    <location>
        <begin position="719"/>
        <end position="753"/>
    </location>
</feature>
<feature type="compositionally biased region" description="Polar residues" evidence="2">
    <location>
        <begin position="768"/>
        <end position="781"/>
    </location>
</feature>
<feature type="compositionally biased region" description="Low complexity" evidence="2">
    <location>
        <begin position="796"/>
        <end position="813"/>
    </location>
</feature>
<feature type="compositionally biased region" description="Basic residues" evidence="2">
    <location>
        <begin position="830"/>
        <end position="840"/>
    </location>
</feature>
<feature type="compositionally biased region" description="Low complexity" evidence="2">
    <location>
        <begin position="849"/>
        <end position="858"/>
    </location>
</feature>
<feature type="compositionally biased region" description="Basic and acidic residues" evidence="2">
    <location>
        <begin position="864"/>
        <end position="877"/>
    </location>
</feature>
<feature type="compositionally biased region" description="Low complexity" evidence="2">
    <location>
        <begin position="879"/>
        <end position="916"/>
    </location>
</feature>
<feature type="compositionally biased region" description="Polar residues" evidence="2">
    <location>
        <begin position="921"/>
        <end position="932"/>
    </location>
</feature>
<feature type="compositionally biased region" description="Pro residues" evidence="2">
    <location>
        <begin position="933"/>
        <end position="944"/>
    </location>
</feature>
<feature type="compositionally biased region" description="Basic and acidic residues" evidence="2">
    <location>
        <begin position="1019"/>
        <end position="1036"/>
    </location>
</feature>
<feature type="compositionally biased region" description="Low complexity" evidence="2">
    <location>
        <begin position="1037"/>
        <end position="1062"/>
    </location>
</feature>
<feature type="compositionally biased region" description="Low complexity" evidence="2">
    <location>
        <begin position="1252"/>
        <end position="1275"/>
    </location>
</feature>
<feature type="compositionally biased region" description="Polar residues" evidence="2">
    <location>
        <begin position="1276"/>
        <end position="1286"/>
    </location>
</feature>
<feature type="compositionally biased region" description="Polar residues" evidence="2">
    <location>
        <begin position="1309"/>
        <end position="1322"/>
    </location>
</feature>
<feature type="splice variant" id="VSP_062074" description="In isoform D.">
    <original>GEYPFRCQKCGKRFQSEDVYTTH</original>
    <variation>ASRRQNKSNPSMYPANAQRRIKI</variation>
    <location>
        <begin position="1351"/>
        <end position="1373"/>
    </location>
</feature>
<feature type="splice variant" id="VSP_062075" description="In isoform F.">
    <original>GEYPFRCQKCGKRFQSE</original>
    <variation>VSLPYVCVKRLKDSQNS</variation>
    <location>
        <begin position="1351"/>
        <end position="1367"/>
    </location>
</feature>
<feature type="splice variant" id="VSP_062076" description="In isoform F.">
    <location>
        <begin position="1368"/>
        <end position="1596"/>
    </location>
</feature>
<feature type="splice variant" id="VSP_062077" description="In isoform D.">
    <location>
        <begin position="1374"/>
        <end position="1596"/>
    </location>
</feature>
<feature type="mutagenesis site" description="Impaired transcription factor activity due to reduced DNA-binding." evidence="12">
    <original>CTAC</original>
    <variation>STAS</variation>
    <location>
        <begin position="554"/>
        <end position="557"/>
    </location>
</feature>
<feature type="mutagenesis site" description="Hyperactive mutant allele, leading to increased expression of target genes." evidence="15">
    <original>C</original>
    <variation>S</variation>
    <location>
        <position position="554"/>
    </location>
</feature>
<feature type="mutagenesis site" description="In Zld(JAZ) allele; female knockin flies are sterile due to embryonic lethality." evidence="15">
    <original>FTSSGHLKRHYNTTLHKN</original>
    <variation>ATASGHLKRHANTTLHKA</variation>
    <location>
        <begin position="561"/>
        <end position="578"/>
    </location>
</feature>
<feature type="mutagenesis site" description="Impaired transcription factor activity due to reduced DNA-binding." evidence="12">
    <original>CLEC</original>
    <variation>SLES</variation>
    <location>
        <begin position="1328"/>
        <end position="1331"/>
    </location>
</feature>
<feature type="mutagenesis site" description="Impaired transcription factor activity due to reduced DNA-binding." evidence="12">
    <original>CELC</original>
    <variation>SELS</variation>
    <location>
        <begin position="1386"/>
        <end position="1389"/>
    </location>
</feature>
<feature type="mutagenesis site" description="Impaired transcription factor activity due to reduced DNA-binding." evidence="12">
    <original>CDIC</original>
    <variation>SDIS</variation>
    <location>
        <begin position="1415"/>
        <end position="1418"/>
    </location>
</feature>
<keyword id="KW-0025">Alternative splicing</keyword>
<keyword id="KW-0158">Chromosome</keyword>
<keyword id="KW-0217">Developmental protein</keyword>
<keyword id="KW-0479">Metal-binding</keyword>
<keyword id="KW-0539">Nucleus</keyword>
<keyword id="KW-1185">Reference proteome</keyword>
<keyword id="KW-0677">Repeat</keyword>
<keyword id="KW-0804">Transcription</keyword>
<keyword id="KW-0805">Transcription regulation</keyword>
<keyword id="KW-0862">Zinc</keyword>
<keyword id="KW-0863">Zinc-finger</keyword>
<proteinExistence type="evidence at protein level"/>
<accession>Q9VWC6</accession>
<accession>M9NES1</accession>
<accession>X2BZL0</accession>
<dbReference type="EMBL" id="AE014298">
    <property type="protein sequence ID" value="AAF49020.1"/>
    <property type="molecule type" value="Genomic_DNA"/>
</dbReference>
<dbReference type="EMBL" id="AE014298">
    <property type="protein sequence ID" value="AAN09519.1"/>
    <property type="molecule type" value="Genomic_DNA"/>
</dbReference>
<dbReference type="EMBL" id="AE014298">
    <property type="protein sequence ID" value="AFH07480.1"/>
    <property type="molecule type" value="Genomic_DNA"/>
</dbReference>
<dbReference type="EMBL" id="AE014298">
    <property type="protein sequence ID" value="AFH07481.1"/>
    <property type="molecule type" value="Genomic_DNA"/>
</dbReference>
<dbReference type="EMBL" id="AE014298">
    <property type="protein sequence ID" value="AHN59936.1"/>
    <property type="molecule type" value="Genomic_DNA"/>
</dbReference>
<dbReference type="EMBL" id="BT132946">
    <property type="protein sequence ID" value="AEW31265.1"/>
    <property type="molecule type" value="mRNA"/>
</dbReference>
<dbReference type="RefSeq" id="NP_001245768.1">
    <molecule id="Q9VWC6-3"/>
    <property type="nucleotide sequence ID" value="NM_001258839.2"/>
</dbReference>
<dbReference type="RefSeq" id="NP_001245769.1">
    <molecule id="Q9VWC6-2"/>
    <property type="nucleotide sequence ID" value="NM_001258840.3"/>
</dbReference>
<dbReference type="RefSeq" id="NP_001285466.1">
    <molecule id="Q9VWC6-1"/>
    <property type="nucleotide sequence ID" value="NM_001298537.1"/>
</dbReference>
<dbReference type="RefSeq" id="NP_608356.1">
    <molecule id="Q9VWC6-1"/>
    <property type="nucleotide sequence ID" value="NM_134512.5"/>
</dbReference>
<dbReference type="RefSeq" id="NP_728304.1">
    <molecule id="Q9VWC6-1"/>
    <property type="nucleotide sequence ID" value="NM_167685.3"/>
</dbReference>
<dbReference type="SMR" id="Q9VWC6"/>
<dbReference type="FunCoup" id="Q9VWC6">
    <property type="interactions" value="305"/>
</dbReference>
<dbReference type="IntAct" id="Q9VWC6">
    <property type="interactions" value="1"/>
</dbReference>
<dbReference type="STRING" id="7227.FBpp0074577"/>
<dbReference type="GlyGen" id="Q9VWC6">
    <property type="glycosylation" value="3 sites"/>
</dbReference>
<dbReference type="PaxDb" id="7227-FBpp0074576"/>
<dbReference type="DNASU" id="32994"/>
<dbReference type="EnsemblMetazoa" id="FBtr0074807">
    <molecule id="Q9VWC6-1"/>
    <property type="protein sequence ID" value="FBpp0074576"/>
    <property type="gene ID" value="FBgn0259789"/>
</dbReference>
<dbReference type="EnsemblMetazoa" id="FBtr0074808">
    <molecule id="Q9VWC6-1"/>
    <property type="protein sequence ID" value="FBpp0074577"/>
    <property type="gene ID" value="FBgn0259789"/>
</dbReference>
<dbReference type="EnsemblMetazoa" id="FBtr0307537">
    <molecule id="Q9VWC6-2"/>
    <property type="protein sequence ID" value="FBpp0300192"/>
    <property type="gene ID" value="FBgn0259789"/>
</dbReference>
<dbReference type="EnsemblMetazoa" id="FBtr0344733">
    <molecule id="Q9VWC6-3"/>
    <property type="protein sequence ID" value="FBpp0311065"/>
    <property type="gene ID" value="FBgn0259789"/>
</dbReference>
<dbReference type="EnsemblMetazoa" id="FBtr0345014">
    <molecule id="Q9VWC6-1"/>
    <property type="protein sequence ID" value="FBpp0311265"/>
    <property type="gene ID" value="FBgn0259789"/>
</dbReference>
<dbReference type="GeneID" id="32994"/>
<dbReference type="KEGG" id="dme:Dmel_CG12701"/>
<dbReference type="UCSC" id="CG12701-RA">
    <molecule id="Q9VWC6-1"/>
    <property type="organism name" value="d. melanogaster"/>
</dbReference>
<dbReference type="AGR" id="FB:FBgn0259789"/>
<dbReference type="CTD" id="32994"/>
<dbReference type="FlyBase" id="FBgn0259789">
    <property type="gene designation" value="zld"/>
</dbReference>
<dbReference type="VEuPathDB" id="VectorBase:FBgn0259789"/>
<dbReference type="eggNOG" id="KOG1721">
    <property type="taxonomic scope" value="Eukaryota"/>
</dbReference>
<dbReference type="GeneTree" id="ENSGT00940000171158"/>
<dbReference type="HOGENOM" id="CLU_003681_0_0_1"/>
<dbReference type="OMA" id="YASDMQQ"/>
<dbReference type="OrthoDB" id="8117402at2759"/>
<dbReference type="Reactome" id="R-DME-212436">
    <property type="pathway name" value="Generic Transcription Pathway"/>
</dbReference>
<dbReference type="BioGRID-ORCS" id="32994">
    <property type="hits" value="0 hits in 1 CRISPR screen"/>
</dbReference>
<dbReference type="ChiTaRS" id="vfl">
    <property type="organism name" value="fly"/>
</dbReference>
<dbReference type="GenomeRNAi" id="32994"/>
<dbReference type="PRO" id="PR:Q9VWC6"/>
<dbReference type="Proteomes" id="UP000000803">
    <property type="component" value="Chromosome X"/>
</dbReference>
<dbReference type="Bgee" id="FBgn0259789">
    <property type="expression patterns" value="Expressed in cleaving embryo and 152 other cell types or tissues"/>
</dbReference>
<dbReference type="ExpressionAtlas" id="Q9VWC6">
    <property type="expression patterns" value="baseline and differential"/>
</dbReference>
<dbReference type="GO" id="GO:0000785">
    <property type="term" value="C:chromatin"/>
    <property type="evidence" value="ECO:0000314"/>
    <property type="project" value="FlyBase"/>
</dbReference>
<dbReference type="GO" id="GO:0005654">
    <property type="term" value="C:nucleoplasm"/>
    <property type="evidence" value="ECO:0000314"/>
    <property type="project" value="FlyBase"/>
</dbReference>
<dbReference type="GO" id="GO:0005634">
    <property type="term" value="C:nucleus"/>
    <property type="evidence" value="ECO:0000314"/>
    <property type="project" value="UniProtKB"/>
</dbReference>
<dbReference type="GO" id="GO:0140587">
    <property type="term" value="F:chromatin loop anchoring activity"/>
    <property type="evidence" value="ECO:0000315"/>
    <property type="project" value="FlyBase"/>
</dbReference>
<dbReference type="GO" id="GO:0001228">
    <property type="term" value="F:DNA-binding transcription activator activity, RNA polymerase II-specific"/>
    <property type="evidence" value="ECO:0000318"/>
    <property type="project" value="GO_Central"/>
</dbReference>
<dbReference type="GO" id="GO:0000981">
    <property type="term" value="F:DNA-binding transcription factor activity, RNA polymerase II-specific"/>
    <property type="evidence" value="ECO:0000314"/>
    <property type="project" value="UniProtKB"/>
</dbReference>
<dbReference type="GO" id="GO:0031491">
    <property type="term" value="F:nucleosome binding"/>
    <property type="evidence" value="ECO:0000315"/>
    <property type="project" value="FlyBase"/>
</dbReference>
<dbReference type="GO" id="GO:0000978">
    <property type="term" value="F:RNA polymerase II cis-regulatory region sequence-specific DNA binding"/>
    <property type="evidence" value="ECO:0000314"/>
    <property type="project" value="UniProtKB"/>
</dbReference>
<dbReference type="GO" id="GO:0043565">
    <property type="term" value="F:sequence-specific DNA binding"/>
    <property type="evidence" value="ECO:0000314"/>
    <property type="project" value="FlyBase"/>
</dbReference>
<dbReference type="GO" id="GO:0000976">
    <property type="term" value="F:transcription cis-regulatory region binding"/>
    <property type="evidence" value="ECO:0000314"/>
    <property type="project" value="FlyBase"/>
</dbReference>
<dbReference type="GO" id="GO:0008270">
    <property type="term" value="F:zinc ion binding"/>
    <property type="evidence" value="ECO:0007669"/>
    <property type="project" value="UniProtKB-KW"/>
</dbReference>
<dbReference type="GO" id="GO:0007349">
    <property type="term" value="P:cellularization"/>
    <property type="evidence" value="ECO:0000315"/>
    <property type="project" value="FlyBase"/>
</dbReference>
<dbReference type="GO" id="GO:0006338">
    <property type="term" value="P:chromatin remodeling"/>
    <property type="evidence" value="ECO:0000314"/>
    <property type="project" value="UniProtKB"/>
</dbReference>
<dbReference type="GO" id="GO:0141065">
    <property type="term" value="P:maternal mRNA clearance"/>
    <property type="evidence" value="ECO:0000314"/>
    <property type="project" value="UniProtKB"/>
</dbReference>
<dbReference type="GO" id="GO:0160021">
    <property type="term" value="P:maternal-to-zygotic transition of gene expression"/>
    <property type="evidence" value="ECO:0000314"/>
    <property type="project" value="UniProtKB"/>
</dbReference>
<dbReference type="GO" id="GO:0061614">
    <property type="term" value="P:miRNA transcription"/>
    <property type="evidence" value="ECO:0000314"/>
    <property type="project" value="UniProtKB"/>
</dbReference>
<dbReference type="GO" id="GO:0000278">
    <property type="term" value="P:mitotic cell cycle"/>
    <property type="evidence" value="ECO:0000315"/>
    <property type="project" value="FlyBase"/>
</dbReference>
<dbReference type="GO" id="GO:0014017">
    <property type="term" value="P:neuroblast fate commitment"/>
    <property type="evidence" value="ECO:0000314"/>
    <property type="project" value="UniProtKB"/>
</dbReference>
<dbReference type="GO" id="GO:0034728">
    <property type="term" value="P:nucleosome organization"/>
    <property type="evidence" value="ECO:0000314"/>
    <property type="project" value="UniProtKB"/>
</dbReference>
<dbReference type="GO" id="GO:0045893">
    <property type="term" value="P:positive regulation of DNA-templated transcription"/>
    <property type="evidence" value="ECO:0000314"/>
    <property type="project" value="FlyBase"/>
</dbReference>
<dbReference type="GO" id="GO:2000543">
    <property type="term" value="P:positive regulation of gastrulation"/>
    <property type="evidence" value="ECO:0000315"/>
    <property type="project" value="FlyBase"/>
</dbReference>
<dbReference type="GO" id="GO:0010628">
    <property type="term" value="P:positive regulation of gene expression"/>
    <property type="evidence" value="ECO:0000315"/>
    <property type="project" value="FlyBase"/>
</dbReference>
<dbReference type="GO" id="GO:0002052">
    <property type="term" value="P:positive regulation of neuroblast proliferation"/>
    <property type="evidence" value="ECO:0000315"/>
    <property type="project" value="FlyBase"/>
</dbReference>
<dbReference type="GO" id="GO:0006357">
    <property type="term" value="P:regulation of transcription by RNA polymerase II"/>
    <property type="evidence" value="ECO:0000318"/>
    <property type="project" value="GO_Central"/>
</dbReference>
<dbReference type="GO" id="GO:0035220">
    <property type="term" value="P:wing disc development"/>
    <property type="evidence" value="ECO:0000315"/>
    <property type="project" value="UniProtKB"/>
</dbReference>
<dbReference type="Gene3D" id="3.30.160.60">
    <property type="entry name" value="Classic Zinc Finger"/>
    <property type="match status" value="4"/>
</dbReference>
<dbReference type="InterPro" id="IPR022755">
    <property type="entry name" value="Znf_C2H2_jaz"/>
</dbReference>
<dbReference type="InterPro" id="IPR036236">
    <property type="entry name" value="Znf_C2H2_sf"/>
</dbReference>
<dbReference type="InterPro" id="IPR013087">
    <property type="entry name" value="Znf_C2H2_type"/>
</dbReference>
<dbReference type="PANTHER" id="PTHR24379:SF121">
    <property type="entry name" value="C2H2-TYPE DOMAIN-CONTAINING PROTEIN"/>
    <property type="match status" value="1"/>
</dbReference>
<dbReference type="PANTHER" id="PTHR24379">
    <property type="entry name" value="KRAB AND ZINC FINGER DOMAIN-CONTAINING"/>
    <property type="match status" value="1"/>
</dbReference>
<dbReference type="Pfam" id="PF00096">
    <property type="entry name" value="zf-C2H2"/>
    <property type="match status" value="1"/>
</dbReference>
<dbReference type="Pfam" id="PF12171">
    <property type="entry name" value="zf-C2H2_jaz"/>
    <property type="match status" value="1"/>
</dbReference>
<dbReference type="SMART" id="SM00355">
    <property type="entry name" value="ZnF_C2H2"/>
    <property type="match status" value="6"/>
</dbReference>
<dbReference type="SUPFAM" id="SSF57667">
    <property type="entry name" value="beta-beta-alpha zinc fingers"/>
    <property type="match status" value="3"/>
</dbReference>
<dbReference type="PROSITE" id="PS00028">
    <property type="entry name" value="ZINC_FINGER_C2H2_1"/>
    <property type="match status" value="5"/>
</dbReference>
<dbReference type="PROSITE" id="PS50157">
    <property type="entry name" value="ZINC_FINGER_C2H2_2"/>
    <property type="match status" value="5"/>
</dbReference>